<reference key="1">
    <citation type="journal article" date="2007" name="BMC Microbiol.">
        <title>Subtle genetic changes enhance virulence of methicillin resistant and sensitive Staphylococcus aureus.</title>
        <authorList>
            <person name="Highlander S.K."/>
            <person name="Hulten K.G."/>
            <person name="Qin X."/>
            <person name="Jiang H."/>
            <person name="Yerrapragada S."/>
            <person name="Mason E.O. Jr."/>
            <person name="Shang Y."/>
            <person name="Williams T.M."/>
            <person name="Fortunov R.M."/>
            <person name="Liu Y."/>
            <person name="Igboeli O."/>
            <person name="Petrosino J."/>
            <person name="Tirumalai M."/>
            <person name="Uzman A."/>
            <person name="Fox G.E."/>
            <person name="Cardenas A.M."/>
            <person name="Muzny D.M."/>
            <person name="Hemphill L."/>
            <person name="Ding Y."/>
            <person name="Dugan S."/>
            <person name="Blyth P.R."/>
            <person name="Buhay C.J."/>
            <person name="Dinh H.H."/>
            <person name="Hawes A.C."/>
            <person name="Holder M."/>
            <person name="Kovar C.L."/>
            <person name="Lee S.L."/>
            <person name="Liu W."/>
            <person name="Nazareth L.V."/>
            <person name="Wang Q."/>
            <person name="Zhou J."/>
            <person name="Kaplan S.L."/>
            <person name="Weinstock G.M."/>
        </authorList>
    </citation>
    <scope>NUCLEOTIDE SEQUENCE [LARGE SCALE GENOMIC DNA]</scope>
    <source>
        <strain>USA300 / TCH1516</strain>
    </source>
</reference>
<protein>
    <recommendedName>
        <fullName>Na(+)/H(+) antiporter subunit D1</fullName>
    </recommendedName>
    <alternativeName>
        <fullName>Mnh complex subunit D1</fullName>
    </alternativeName>
</protein>
<sequence length="498" mass="54772">MIESNMLVLTLVIPVITAILLVFIGKRPIIKRYVALGGTLLTLVAAIINLANVVKHGPIRVELGSWKAPYSIVFVLDIFSALLIITSIIITAIVILYSYQTIGIERERYYYYFSVLFMLIGIIGAFTTGDIFNLFVYFEVFLMSSYFLLVIGSTKIQLQETIKYVLVNVVSSSFFVMGVAILYSVVGTLNLADISNKLANLSAHDSGLVNIVFILFIFVFATKAGVFPMFVWLPSAYYAPPIPIIAFFGALLTKVGVYAIARTLSLFFSDNVSFSHYVILFLALLTIIFGCVGAVAYANIKKIILYNVMIAVGVILVGVAMMTESGMIGAIYYTLHDMLVKLALFLLIGIMIKITGTADLRQFGGLIKRYPVLGWSFFIAALSLAGIPPLSGFYGKFFIVQSTFERGFYLSGVIVLLSSLVVLYSVIRIFLQGFFGQPKGYDLNNKVDVKYLTTIAIVAVVITVLYGLSADYLYPMVKAGAETFYNPSTYVKAVLGGK</sequence>
<keyword id="KW-0050">Antiport</keyword>
<keyword id="KW-1003">Cell membrane</keyword>
<keyword id="KW-0375">Hydrogen ion transport</keyword>
<keyword id="KW-0406">Ion transport</keyword>
<keyword id="KW-0472">Membrane</keyword>
<keyword id="KW-0915">Sodium</keyword>
<keyword id="KW-0739">Sodium transport</keyword>
<keyword id="KW-0812">Transmembrane</keyword>
<keyword id="KW-1133">Transmembrane helix</keyword>
<keyword id="KW-0813">Transport</keyword>
<comment type="function">
    <text evidence="1">Mnh complex is a Na(+)/H(+) antiporter involved in Na(+) excretion.</text>
</comment>
<comment type="subunit">
    <text evidence="1">May form a heterooligomeric complex that consists of seven subunits: mnhA1, mnhB1, mnhC1, mnhD1, mnhE1, mnhF1 and mnhG1.</text>
</comment>
<comment type="subcellular location">
    <subcellularLocation>
        <location evidence="3">Cell membrane</location>
        <topology evidence="3">Multi-pass membrane protein</topology>
    </subcellularLocation>
</comment>
<comment type="similarity">
    <text evidence="3">Belongs to the CPA3 antiporters (TC 2.A.63) subunit D family.</text>
</comment>
<dbReference type="EMBL" id="CP000730">
    <property type="protein sequence ID" value="ABX28930.1"/>
    <property type="molecule type" value="Genomic_DNA"/>
</dbReference>
<dbReference type="RefSeq" id="WP_000573079.1">
    <property type="nucleotide sequence ID" value="NC_010079.1"/>
</dbReference>
<dbReference type="SMR" id="A8Z056"/>
<dbReference type="KEGG" id="sax:USA300HOU_0909"/>
<dbReference type="HOGENOM" id="CLU_007100_9_2_9"/>
<dbReference type="GO" id="GO:0005886">
    <property type="term" value="C:plasma membrane"/>
    <property type="evidence" value="ECO:0007669"/>
    <property type="project" value="UniProtKB-SubCell"/>
</dbReference>
<dbReference type="GO" id="GO:0008137">
    <property type="term" value="F:NADH dehydrogenase (ubiquinone) activity"/>
    <property type="evidence" value="ECO:0007669"/>
    <property type="project" value="InterPro"/>
</dbReference>
<dbReference type="GO" id="GO:0015386">
    <property type="term" value="F:potassium:proton antiporter activity"/>
    <property type="evidence" value="ECO:0007669"/>
    <property type="project" value="InterPro"/>
</dbReference>
<dbReference type="GO" id="GO:0042773">
    <property type="term" value="P:ATP synthesis coupled electron transport"/>
    <property type="evidence" value="ECO:0007669"/>
    <property type="project" value="InterPro"/>
</dbReference>
<dbReference type="GO" id="GO:0006814">
    <property type="term" value="P:sodium ion transport"/>
    <property type="evidence" value="ECO:0007669"/>
    <property type="project" value="UniProtKB-KW"/>
</dbReference>
<dbReference type="InterPro" id="IPR050586">
    <property type="entry name" value="CPA3_Na-H_Antiporter_D"/>
</dbReference>
<dbReference type="InterPro" id="IPR004775">
    <property type="entry name" value="MnhD1"/>
</dbReference>
<dbReference type="InterPro" id="IPR003918">
    <property type="entry name" value="NADH_UbQ_OxRdtase"/>
</dbReference>
<dbReference type="InterPro" id="IPR001750">
    <property type="entry name" value="ND/Mrp_TM"/>
</dbReference>
<dbReference type="NCBIfam" id="TIGR00944">
    <property type="entry name" value="2a6301s04"/>
    <property type="match status" value="1"/>
</dbReference>
<dbReference type="NCBIfam" id="NF005818">
    <property type="entry name" value="PRK07691.1"/>
    <property type="match status" value="1"/>
</dbReference>
<dbReference type="PANTHER" id="PTHR42703:SF1">
    <property type="entry name" value="NA(+)_H(+) ANTIPORTER SUBUNIT D1"/>
    <property type="match status" value="1"/>
</dbReference>
<dbReference type="PANTHER" id="PTHR42703">
    <property type="entry name" value="NADH DEHYDROGENASE"/>
    <property type="match status" value="1"/>
</dbReference>
<dbReference type="Pfam" id="PF00361">
    <property type="entry name" value="Proton_antipo_M"/>
    <property type="match status" value="1"/>
</dbReference>
<dbReference type="PRINTS" id="PR01437">
    <property type="entry name" value="NUOXDRDTASE4"/>
</dbReference>
<gene>
    <name type="primary">mnhD1</name>
    <name type="ordered locus">USA300HOU_0909</name>
</gene>
<feature type="chain" id="PRO_0000372135" description="Na(+)/H(+) antiporter subunit D1">
    <location>
        <begin position="1"/>
        <end position="498"/>
    </location>
</feature>
<feature type="transmembrane region" description="Helical" evidence="2">
    <location>
        <begin position="5"/>
        <end position="25"/>
    </location>
</feature>
<feature type="transmembrane region" description="Helical" evidence="2">
    <location>
        <begin position="34"/>
        <end position="54"/>
    </location>
</feature>
<feature type="transmembrane region" description="Helical" evidence="2">
    <location>
        <begin position="75"/>
        <end position="95"/>
    </location>
</feature>
<feature type="transmembrane region" description="Helical" evidence="2">
    <location>
        <begin position="109"/>
        <end position="129"/>
    </location>
</feature>
<feature type="transmembrane region" description="Helical" evidence="2">
    <location>
        <begin position="131"/>
        <end position="151"/>
    </location>
</feature>
<feature type="transmembrane region" description="Helical" evidence="2">
    <location>
        <begin position="169"/>
        <end position="189"/>
    </location>
</feature>
<feature type="transmembrane region" description="Helical" evidence="2">
    <location>
        <begin position="211"/>
        <end position="231"/>
    </location>
</feature>
<feature type="transmembrane region" description="Helical" evidence="2">
    <location>
        <begin position="241"/>
        <end position="261"/>
    </location>
</feature>
<feature type="transmembrane region" description="Helical" evidence="2">
    <location>
        <begin position="278"/>
        <end position="298"/>
    </location>
</feature>
<feature type="transmembrane region" description="Helical" evidence="2">
    <location>
        <begin position="303"/>
        <end position="323"/>
    </location>
</feature>
<feature type="transmembrane region" description="Helical" evidence="2">
    <location>
        <begin position="338"/>
        <end position="358"/>
    </location>
</feature>
<feature type="transmembrane region" description="Helical" evidence="2">
    <location>
        <begin position="373"/>
        <end position="393"/>
    </location>
</feature>
<feature type="transmembrane region" description="Helical" evidence="2">
    <location>
        <begin position="407"/>
        <end position="427"/>
    </location>
</feature>
<feature type="transmembrane region" description="Helical" evidence="2">
    <location>
        <begin position="455"/>
        <end position="475"/>
    </location>
</feature>
<name>MNHD1_STAAT</name>
<evidence type="ECO:0000250" key="1"/>
<evidence type="ECO:0000255" key="2"/>
<evidence type="ECO:0000305" key="3"/>
<proteinExistence type="inferred from homology"/>
<accession>A8Z056</accession>
<organism>
    <name type="scientific">Staphylococcus aureus (strain USA300 / TCH1516)</name>
    <dbReference type="NCBI Taxonomy" id="451516"/>
    <lineage>
        <taxon>Bacteria</taxon>
        <taxon>Bacillati</taxon>
        <taxon>Bacillota</taxon>
        <taxon>Bacilli</taxon>
        <taxon>Bacillales</taxon>
        <taxon>Staphylococcaceae</taxon>
        <taxon>Staphylococcus</taxon>
    </lineage>
</organism>